<evidence type="ECO:0000250" key="1">
    <source>
        <dbReference type="UniProtKB" id="Q0E940"/>
    </source>
</evidence>
<evidence type="ECO:0000255" key="2">
    <source>
        <dbReference type="HAMAP-Rule" id="MF_03001"/>
    </source>
</evidence>
<evidence type="ECO:0000256" key="3">
    <source>
        <dbReference type="SAM" id="MobiDB-lite"/>
    </source>
</evidence>
<reference key="1">
    <citation type="journal article" date="2007" name="Nature">
        <title>Evolution of genes and genomes on the Drosophila phylogeny.</title>
        <authorList>
            <consortium name="Drosophila 12 genomes consortium"/>
        </authorList>
    </citation>
    <scope>NUCLEOTIDE SEQUENCE [LARGE SCALE GENOMIC DNA]</scope>
    <source>
        <strain>Tucson 15081-1352.22</strain>
    </source>
</reference>
<organism>
    <name type="scientific">Drosophila mojavensis</name>
    <name type="common">Fruit fly</name>
    <dbReference type="NCBI Taxonomy" id="7230"/>
    <lineage>
        <taxon>Eukaryota</taxon>
        <taxon>Metazoa</taxon>
        <taxon>Ecdysozoa</taxon>
        <taxon>Arthropoda</taxon>
        <taxon>Hexapoda</taxon>
        <taxon>Insecta</taxon>
        <taxon>Pterygota</taxon>
        <taxon>Neoptera</taxon>
        <taxon>Endopterygota</taxon>
        <taxon>Diptera</taxon>
        <taxon>Brachycera</taxon>
        <taxon>Muscomorpha</taxon>
        <taxon>Ephydroidea</taxon>
        <taxon>Drosophilidae</taxon>
        <taxon>Drosophila</taxon>
    </lineage>
</organism>
<sequence>MAKKKSEEHSGADANDSDYNEEPNFDDPPGYVDNISDEDLLGDMLAQRPSEADGVESVVVVDNMPKVEPSRLEKLKSVINKLFSQCGEIVNVVYPVDEEGKTKGYAFMEFKTASQAEDAVKKLNNHRLDKNYTFAVNLFTDFQKYENIPEKWEPPTVQPFKVQSDLYNFINDPDAYDQYCVAAETAPNCVQVGFWQNTLPEPNELETRERFTDTFVKWSPLGTYVVTFHKPGVAIWGGSSFQKIQKFPHPGTQFVEFSPCENYLVTYGPTPTGQKIIIWDIRTGAEKRSFVGDGMSVLSMFRWSHDDKFVARMGENSIHIYETPSFYLLDLKSIKIAGIRGFSWSPTDNVIAYWVEEQNQIPARVTLMEIPKKREIRNKNLFHVADCKLHWQKSGDYLCVKVDRYSKLKKDKKELDVKFLGMFYNFEIFHMREKEIPVDSVEIRELILAFAWEPIGNKFSIIHGEPNSANVSFYEVNKGVKPSLVKRLEKKSCTHLFWSPRGQFIVMANLTMGTFEFVDTTNDYIISASPDHFRASEVEWDPTGRYVVTGVSSWKVKEDTGFNMYTFQGRIIRRTILKNFVQFLWRPRPPTLLSEEKQKEIKKNLKKYYPIFEQKDRLRLTRASKELLEKRAQLRETFMEYRNKRIAEWKDQKSRRIMLRGHVDTDNLETDEVDEEVVEFLVKEEVTLLE</sequence>
<proteinExistence type="inferred from homology"/>
<keyword id="KW-0175">Coiled coil</keyword>
<keyword id="KW-0963">Cytoplasm</keyword>
<keyword id="KW-0396">Initiation factor</keyword>
<keyword id="KW-0648">Protein biosynthesis</keyword>
<keyword id="KW-1185">Reference proteome</keyword>
<keyword id="KW-0677">Repeat</keyword>
<keyword id="KW-0694">RNA-binding</keyword>
<keyword id="KW-0853">WD repeat</keyword>
<comment type="function">
    <text evidence="2">RNA-binding component of the eukaryotic translation initiation factor 3 (eIF-3) complex, which is involved in protein synthesis of a specialized repertoire of mRNAs and, together with other initiation factors, stimulates binding of mRNA and methionyl-tRNAi to the 40S ribosome. The eIF-3 complex specifically targets and initiates translation of a subset of mRNAs involved in cell proliferation.</text>
</comment>
<comment type="subunit">
    <text evidence="1 2">Component of the eukaryotic translation initiation factor 3 (eIF-3) complex. The eIF-3 complex interacts with pix. Interacts with mxt (By similarity).</text>
</comment>
<comment type="subcellular location">
    <subcellularLocation>
        <location evidence="2">Cytoplasm</location>
    </subcellularLocation>
</comment>
<comment type="similarity">
    <text evidence="2">Belongs to the eIF-3 subunit B family.</text>
</comment>
<dbReference type="EMBL" id="CH933808">
    <property type="protein sequence ID" value="EDW10024.1"/>
    <property type="molecule type" value="Genomic_DNA"/>
</dbReference>
<dbReference type="SMR" id="B4KNN9"/>
<dbReference type="FunCoup" id="B4KNN9">
    <property type="interactions" value="2624"/>
</dbReference>
<dbReference type="EnsemblMetazoa" id="FBtr0171565">
    <property type="protein sequence ID" value="FBpp0170057"/>
    <property type="gene ID" value="FBgn0143574"/>
</dbReference>
<dbReference type="EnsemblMetazoa" id="XM_002006053.4">
    <property type="protein sequence ID" value="XP_002006089.1"/>
    <property type="gene ID" value="LOC6580233"/>
</dbReference>
<dbReference type="GeneID" id="6580233"/>
<dbReference type="KEGG" id="dmo:Dmoj_GI20840"/>
<dbReference type="CTD" id="8662"/>
<dbReference type="eggNOG" id="KOG2314">
    <property type="taxonomic scope" value="Eukaryota"/>
</dbReference>
<dbReference type="HOGENOM" id="CLU_011152_1_0_1"/>
<dbReference type="InParanoid" id="B4KNN9"/>
<dbReference type="OMA" id="LWGGPQF"/>
<dbReference type="OrthoDB" id="10250414at2759"/>
<dbReference type="PhylomeDB" id="B4KNN9"/>
<dbReference type="Proteomes" id="UP000009192">
    <property type="component" value="Unassembled WGS sequence"/>
</dbReference>
<dbReference type="GO" id="GO:0016282">
    <property type="term" value="C:eukaryotic 43S preinitiation complex"/>
    <property type="evidence" value="ECO:0007669"/>
    <property type="project" value="UniProtKB-UniRule"/>
</dbReference>
<dbReference type="GO" id="GO:0033290">
    <property type="term" value="C:eukaryotic 48S preinitiation complex"/>
    <property type="evidence" value="ECO:0007669"/>
    <property type="project" value="UniProtKB-UniRule"/>
</dbReference>
<dbReference type="GO" id="GO:0005852">
    <property type="term" value="C:eukaryotic translation initiation factor 3 complex"/>
    <property type="evidence" value="ECO:0000250"/>
    <property type="project" value="UniProtKB"/>
</dbReference>
<dbReference type="GO" id="GO:0003723">
    <property type="term" value="F:RNA binding"/>
    <property type="evidence" value="ECO:0007669"/>
    <property type="project" value="UniProtKB-UniRule"/>
</dbReference>
<dbReference type="GO" id="GO:0003743">
    <property type="term" value="F:translation initiation factor activity"/>
    <property type="evidence" value="ECO:0000250"/>
    <property type="project" value="UniProtKB"/>
</dbReference>
<dbReference type="GO" id="GO:0031369">
    <property type="term" value="F:translation initiation factor binding"/>
    <property type="evidence" value="ECO:0007669"/>
    <property type="project" value="InterPro"/>
</dbReference>
<dbReference type="GO" id="GO:0030707">
    <property type="term" value="P:follicle cell of egg chamber development"/>
    <property type="evidence" value="ECO:0007669"/>
    <property type="project" value="EnsemblMetazoa"/>
</dbReference>
<dbReference type="GO" id="GO:0001732">
    <property type="term" value="P:formation of cytoplasmic translation initiation complex"/>
    <property type="evidence" value="ECO:0007669"/>
    <property type="project" value="UniProtKB-UniRule"/>
</dbReference>
<dbReference type="GO" id="GO:0006446">
    <property type="term" value="P:regulation of translational initiation"/>
    <property type="evidence" value="ECO:0000250"/>
    <property type="project" value="UniProtKB"/>
</dbReference>
<dbReference type="CDD" id="cd12278">
    <property type="entry name" value="RRM_eIF3B"/>
    <property type="match status" value="1"/>
</dbReference>
<dbReference type="FunFam" id="2.130.10.10:FF:003419">
    <property type="entry name" value="Eukaryotic translation initiation factor 3 subunit B"/>
    <property type="match status" value="1"/>
</dbReference>
<dbReference type="FunFam" id="3.30.70.330:FF:000607">
    <property type="entry name" value="Eukaryotic translation initiation factor 3 subunit B"/>
    <property type="match status" value="1"/>
</dbReference>
<dbReference type="Gene3D" id="3.30.70.330">
    <property type="match status" value="1"/>
</dbReference>
<dbReference type="Gene3D" id="2.130.10.10">
    <property type="entry name" value="YVTN repeat-like/Quinoprotein amine dehydrogenase"/>
    <property type="match status" value="1"/>
</dbReference>
<dbReference type="HAMAP" id="MF_03001">
    <property type="entry name" value="eIF3b"/>
    <property type="match status" value="1"/>
</dbReference>
<dbReference type="InterPro" id="IPR011400">
    <property type="entry name" value="EIF3B"/>
</dbReference>
<dbReference type="InterPro" id="IPR034363">
    <property type="entry name" value="eIF3B_RRM"/>
</dbReference>
<dbReference type="InterPro" id="IPR012677">
    <property type="entry name" value="Nucleotide-bd_a/b_plait_sf"/>
</dbReference>
<dbReference type="InterPro" id="IPR035979">
    <property type="entry name" value="RBD_domain_sf"/>
</dbReference>
<dbReference type="InterPro" id="IPR000504">
    <property type="entry name" value="RRM_dom"/>
</dbReference>
<dbReference type="InterPro" id="IPR013979">
    <property type="entry name" value="TIF_beta_prop-like"/>
</dbReference>
<dbReference type="InterPro" id="IPR015943">
    <property type="entry name" value="WD40/YVTN_repeat-like_dom_sf"/>
</dbReference>
<dbReference type="PANTHER" id="PTHR14068">
    <property type="entry name" value="EUKARYOTIC TRANSLATION INITIATION FACTOR 3 EIF3 -RELATED"/>
    <property type="match status" value="1"/>
</dbReference>
<dbReference type="PANTHER" id="PTHR14068:SF0">
    <property type="entry name" value="EUKARYOTIC TRANSLATION INITIATION FACTOR 3 SUBUNIT B"/>
    <property type="match status" value="1"/>
</dbReference>
<dbReference type="Pfam" id="PF08662">
    <property type="entry name" value="eIF2A"/>
    <property type="match status" value="1"/>
</dbReference>
<dbReference type="Pfam" id="PF00076">
    <property type="entry name" value="RRM_1"/>
    <property type="match status" value="1"/>
</dbReference>
<dbReference type="PIRSF" id="PIRSF036424">
    <property type="entry name" value="eIF3b"/>
    <property type="match status" value="1"/>
</dbReference>
<dbReference type="SMART" id="SM00360">
    <property type="entry name" value="RRM"/>
    <property type="match status" value="1"/>
</dbReference>
<dbReference type="SUPFAM" id="SSF82171">
    <property type="entry name" value="DPP6 N-terminal domain-like"/>
    <property type="match status" value="1"/>
</dbReference>
<dbReference type="SUPFAM" id="SSF54928">
    <property type="entry name" value="RNA-binding domain, RBD"/>
    <property type="match status" value="1"/>
</dbReference>
<dbReference type="PROSITE" id="PS50102">
    <property type="entry name" value="RRM"/>
    <property type="match status" value="1"/>
</dbReference>
<accession>B4KNN9</accession>
<gene>
    <name evidence="2" type="primary">eIF3b</name>
    <name evidence="2" type="synonym">eIF3-S9</name>
    <name type="ORF">GI20840</name>
</gene>
<name>EIF3B_DROMO</name>
<protein>
    <recommendedName>
        <fullName evidence="2">Eukaryotic translation initiation factor 3 subunit B</fullName>
        <shortName evidence="2">eIF3b</shortName>
    </recommendedName>
    <alternativeName>
        <fullName evidence="2">Eukaryotic translation initiation factor 3 subunit 9</fullName>
    </alternativeName>
</protein>
<feature type="chain" id="PRO_0000363798" description="Eukaryotic translation initiation factor 3 subunit B">
    <location>
        <begin position="1"/>
        <end position="690"/>
    </location>
</feature>
<feature type="domain" description="RRM" evidence="2">
    <location>
        <begin position="57"/>
        <end position="141"/>
    </location>
</feature>
<feature type="repeat" description="WD 1">
    <location>
        <begin position="207"/>
        <end position="246"/>
    </location>
</feature>
<feature type="repeat" description="WD 2">
    <location>
        <begin position="292"/>
        <end position="331"/>
    </location>
</feature>
<feature type="repeat" description="WD 3">
    <location>
        <begin position="334"/>
        <end position="369"/>
    </location>
</feature>
<feature type="repeat" description="WD 4">
    <location>
        <begin position="442"/>
        <end position="484"/>
    </location>
</feature>
<feature type="repeat" description="WD 5">
    <location>
        <begin position="530"/>
        <end position="575"/>
    </location>
</feature>
<feature type="region of interest" description="Disordered" evidence="3">
    <location>
        <begin position="1"/>
        <end position="33"/>
    </location>
</feature>
<feature type="coiled-coil region" evidence="2">
    <location>
        <begin position="613"/>
        <end position="646"/>
    </location>
</feature>
<feature type="compositionally biased region" description="Basic and acidic residues" evidence="3">
    <location>
        <begin position="1"/>
        <end position="11"/>
    </location>
</feature>
<feature type="compositionally biased region" description="Acidic residues" evidence="3">
    <location>
        <begin position="15"/>
        <end position="25"/>
    </location>
</feature>